<organism>
    <name type="scientific">Alteromonas mediterranea (strain DSM 17117 / CIP 110805 / LMG 28347 / Deep ecotype)</name>
    <dbReference type="NCBI Taxonomy" id="1774373"/>
    <lineage>
        <taxon>Bacteria</taxon>
        <taxon>Pseudomonadati</taxon>
        <taxon>Pseudomonadota</taxon>
        <taxon>Gammaproteobacteria</taxon>
        <taxon>Alteromonadales</taxon>
        <taxon>Alteromonadaceae</taxon>
        <taxon>Alteromonas/Salinimonas group</taxon>
        <taxon>Alteromonas</taxon>
    </lineage>
</organism>
<proteinExistence type="inferred from homology"/>
<sequence length="154" mass="17181">MLLAYTRLSHIHGNIDDSITLDHDTRKKARIKSTTDTGIDIGVFLERGHPLLVGEILKTECGKFIVVKGKAEDVATAIADDWLSFSKICYHLGNRHTSLQIGERWVRFKPDHVLEELAENYGLSINKTPAVFEPESGAYGKSGHNHGHSHSHED</sequence>
<dbReference type="EMBL" id="CP001103">
    <property type="protein sequence ID" value="AEA98989.1"/>
    <property type="molecule type" value="Genomic_DNA"/>
</dbReference>
<dbReference type="RefSeq" id="WP_012519281.1">
    <property type="nucleotide sequence ID" value="NC_011138.3"/>
</dbReference>
<dbReference type="SMR" id="B4RSY0"/>
<dbReference type="KEGG" id="amc:MADE_1014275"/>
<dbReference type="HOGENOM" id="CLU_093757_2_0_6"/>
<dbReference type="Proteomes" id="UP000001870">
    <property type="component" value="Chromosome"/>
</dbReference>
<dbReference type="GO" id="GO:0005737">
    <property type="term" value="C:cytoplasm"/>
    <property type="evidence" value="ECO:0007669"/>
    <property type="project" value="UniProtKB-SubCell"/>
</dbReference>
<dbReference type="GO" id="GO:0016151">
    <property type="term" value="F:nickel cation binding"/>
    <property type="evidence" value="ECO:0007669"/>
    <property type="project" value="UniProtKB-UniRule"/>
</dbReference>
<dbReference type="GO" id="GO:0051082">
    <property type="term" value="F:unfolded protein binding"/>
    <property type="evidence" value="ECO:0007669"/>
    <property type="project" value="UniProtKB-UniRule"/>
</dbReference>
<dbReference type="GO" id="GO:0006457">
    <property type="term" value="P:protein folding"/>
    <property type="evidence" value="ECO:0007669"/>
    <property type="project" value="InterPro"/>
</dbReference>
<dbReference type="GO" id="GO:0065003">
    <property type="term" value="P:protein-containing complex assembly"/>
    <property type="evidence" value="ECO:0007669"/>
    <property type="project" value="InterPro"/>
</dbReference>
<dbReference type="GO" id="GO:0019627">
    <property type="term" value="P:urea metabolic process"/>
    <property type="evidence" value="ECO:0007669"/>
    <property type="project" value="InterPro"/>
</dbReference>
<dbReference type="Gene3D" id="2.60.260.20">
    <property type="entry name" value="Urease metallochaperone UreE, N-terminal domain"/>
    <property type="match status" value="1"/>
</dbReference>
<dbReference type="Gene3D" id="3.30.70.790">
    <property type="entry name" value="UreE, C-terminal domain"/>
    <property type="match status" value="1"/>
</dbReference>
<dbReference type="HAMAP" id="MF_00822">
    <property type="entry name" value="UreE"/>
    <property type="match status" value="1"/>
</dbReference>
<dbReference type="InterPro" id="IPR012406">
    <property type="entry name" value="UreE"/>
</dbReference>
<dbReference type="InterPro" id="IPR007864">
    <property type="entry name" value="UreE_C_dom"/>
</dbReference>
<dbReference type="InterPro" id="IPR004029">
    <property type="entry name" value="UreE_N"/>
</dbReference>
<dbReference type="InterPro" id="IPR036118">
    <property type="entry name" value="UreE_N_sf"/>
</dbReference>
<dbReference type="NCBIfam" id="NF009751">
    <property type="entry name" value="PRK13261.1-1"/>
    <property type="match status" value="1"/>
</dbReference>
<dbReference type="NCBIfam" id="NF010711">
    <property type="entry name" value="PRK14113.1"/>
    <property type="match status" value="1"/>
</dbReference>
<dbReference type="Pfam" id="PF05194">
    <property type="entry name" value="UreE_C"/>
    <property type="match status" value="1"/>
</dbReference>
<dbReference type="Pfam" id="PF02814">
    <property type="entry name" value="UreE_N"/>
    <property type="match status" value="1"/>
</dbReference>
<dbReference type="PIRSF" id="PIRSF036402">
    <property type="entry name" value="Ureas_acces_UreE"/>
    <property type="match status" value="1"/>
</dbReference>
<dbReference type="SMART" id="SM00988">
    <property type="entry name" value="UreE_N"/>
    <property type="match status" value="1"/>
</dbReference>
<dbReference type="SUPFAM" id="SSF69737">
    <property type="entry name" value="Urease metallochaperone UreE, C-terminal domain"/>
    <property type="match status" value="1"/>
</dbReference>
<dbReference type="SUPFAM" id="SSF69287">
    <property type="entry name" value="Urease metallochaperone UreE, N-terminal domain"/>
    <property type="match status" value="1"/>
</dbReference>
<name>UREE_ALTMD</name>
<accession>B4RSY0</accession>
<accession>F2GBE3</accession>
<comment type="function">
    <text evidence="1">Involved in urease metallocenter assembly. Binds nickel. Probably functions as a nickel donor during metallocenter assembly.</text>
</comment>
<comment type="subcellular location">
    <subcellularLocation>
        <location evidence="1">Cytoplasm</location>
    </subcellularLocation>
</comment>
<comment type="similarity">
    <text evidence="1">Belongs to the UreE family.</text>
</comment>
<protein>
    <recommendedName>
        <fullName evidence="1">Urease accessory protein UreE</fullName>
    </recommendedName>
</protein>
<gene>
    <name evidence="1" type="primary">ureE</name>
    <name type="ordered locus">MADE_1014275</name>
</gene>
<feature type="chain" id="PRO_1000197432" description="Urease accessory protein UreE">
    <location>
        <begin position="1"/>
        <end position="154"/>
    </location>
</feature>
<feature type="region of interest" description="Disordered" evidence="2">
    <location>
        <begin position="134"/>
        <end position="154"/>
    </location>
</feature>
<feature type="compositionally biased region" description="Basic residues" evidence="2">
    <location>
        <begin position="143"/>
        <end position="154"/>
    </location>
</feature>
<evidence type="ECO:0000255" key="1">
    <source>
        <dbReference type="HAMAP-Rule" id="MF_00822"/>
    </source>
</evidence>
<evidence type="ECO:0000256" key="2">
    <source>
        <dbReference type="SAM" id="MobiDB-lite"/>
    </source>
</evidence>
<keyword id="KW-0143">Chaperone</keyword>
<keyword id="KW-0963">Cytoplasm</keyword>
<keyword id="KW-0533">Nickel</keyword>
<reference key="1">
    <citation type="journal article" date="2008" name="ISME J.">
        <title>Comparative genomics of two ecotypes of the marine planktonic copiotroph Alteromonas macleodii suggests alternative lifestyles associated with different kinds of particulate organic matter.</title>
        <authorList>
            <person name="Ivars-Martinez E."/>
            <person name="Martin-Cuadrado A.-B."/>
            <person name="D'Auria G."/>
            <person name="Mira A."/>
            <person name="Ferriera S."/>
            <person name="Johnson J."/>
            <person name="Friedman R."/>
            <person name="Rodriguez-Valera F."/>
        </authorList>
    </citation>
    <scope>NUCLEOTIDE SEQUENCE [LARGE SCALE GENOMIC DNA]</scope>
    <source>
        <strain>DSM 17117 / CIP 110805 / LMG 28347 / Deep ecotype</strain>
    </source>
</reference>